<dbReference type="EMBL" id="Z48959">
    <property type="protein sequence ID" value="CAA88827.1"/>
    <property type="molecule type" value="Genomic_DNA"/>
</dbReference>
<dbReference type="EMBL" id="M60872">
    <property type="protein sequence ID" value="AAA26190.1"/>
    <property type="molecule type" value="Genomic_DNA"/>
</dbReference>
<dbReference type="EMBL" id="AP009384">
    <property type="protein sequence ID" value="BAF89790.1"/>
    <property type="molecule type" value="Genomic_DNA"/>
</dbReference>
<dbReference type="PIR" id="A35268">
    <property type="entry name" value="A35268"/>
</dbReference>
<dbReference type="RefSeq" id="WP_012172315.1">
    <property type="nucleotide sequence ID" value="NC_009937.1"/>
</dbReference>
<dbReference type="SMR" id="P20669"/>
<dbReference type="STRING" id="438753.AZC_3792"/>
<dbReference type="KEGG" id="azc:AZC_3792"/>
<dbReference type="eggNOG" id="COG0583">
    <property type="taxonomic scope" value="Bacteria"/>
</dbReference>
<dbReference type="HOGENOM" id="CLU_039613_39_0_5"/>
<dbReference type="Proteomes" id="UP000000270">
    <property type="component" value="Chromosome"/>
</dbReference>
<dbReference type="GO" id="GO:0003677">
    <property type="term" value="F:DNA binding"/>
    <property type="evidence" value="ECO:0007669"/>
    <property type="project" value="UniProtKB-KW"/>
</dbReference>
<dbReference type="GO" id="GO:0003700">
    <property type="term" value="F:DNA-binding transcription factor activity"/>
    <property type="evidence" value="ECO:0007669"/>
    <property type="project" value="InterPro"/>
</dbReference>
<dbReference type="CDD" id="cd08462">
    <property type="entry name" value="PBP2_NodD"/>
    <property type="match status" value="1"/>
</dbReference>
<dbReference type="Gene3D" id="3.40.190.10">
    <property type="entry name" value="Periplasmic binding protein-like II"/>
    <property type="match status" value="2"/>
</dbReference>
<dbReference type="Gene3D" id="1.10.10.10">
    <property type="entry name" value="Winged helix-like DNA-binding domain superfamily/Winged helix DNA-binding domain"/>
    <property type="match status" value="1"/>
</dbReference>
<dbReference type="InterPro" id="IPR050389">
    <property type="entry name" value="LysR-type_TF"/>
</dbReference>
<dbReference type="InterPro" id="IPR005119">
    <property type="entry name" value="LysR_subst-bd"/>
</dbReference>
<dbReference type="InterPro" id="IPR037416">
    <property type="entry name" value="NodD_PBP2"/>
</dbReference>
<dbReference type="InterPro" id="IPR000847">
    <property type="entry name" value="Tscrpt_reg_HTH_LysR"/>
</dbReference>
<dbReference type="InterPro" id="IPR036388">
    <property type="entry name" value="WH-like_DNA-bd_sf"/>
</dbReference>
<dbReference type="InterPro" id="IPR036390">
    <property type="entry name" value="WH_DNA-bd_sf"/>
</dbReference>
<dbReference type="PANTHER" id="PTHR30118:SF6">
    <property type="entry name" value="HTH-TYPE TRANSCRIPTIONAL REGULATOR LEUO"/>
    <property type="match status" value="1"/>
</dbReference>
<dbReference type="PANTHER" id="PTHR30118">
    <property type="entry name" value="HTH-TYPE TRANSCRIPTIONAL REGULATOR LEUO-RELATED"/>
    <property type="match status" value="1"/>
</dbReference>
<dbReference type="Pfam" id="PF00126">
    <property type="entry name" value="HTH_1"/>
    <property type="match status" value="1"/>
</dbReference>
<dbReference type="Pfam" id="PF03466">
    <property type="entry name" value="LysR_substrate"/>
    <property type="match status" value="1"/>
</dbReference>
<dbReference type="PRINTS" id="PR00039">
    <property type="entry name" value="HTHLYSR"/>
</dbReference>
<dbReference type="SUPFAM" id="SSF53850">
    <property type="entry name" value="Periplasmic binding protein-like II"/>
    <property type="match status" value="1"/>
</dbReference>
<dbReference type="SUPFAM" id="SSF46785">
    <property type="entry name" value="Winged helix' DNA-binding domain"/>
    <property type="match status" value="1"/>
</dbReference>
<dbReference type="PROSITE" id="PS50931">
    <property type="entry name" value="HTH_LYSR"/>
    <property type="match status" value="1"/>
</dbReference>
<accession>P20669</accession>
<accession>A8INU9</accession>
<keyword id="KW-0010">Activator</keyword>
<keyword id="KW-0238">DNA-binding</keyword>
<keyword id="KW-0536">Nodulation</keyword>
<keyword id="KW-1185">Reference proteome</keyword>
<keyword id="KW-0678">Repressor</keyword>
<keyword id="KW-0804">Transcription</keyword>
<keyword id="KW-0805">Transcription regulation</keyword>
<name>NODD_AZOC5</name>
<evidence type="ECO:0000255" key="1">
    <source>
        <dbReference type="PROSITE-ProRule" id="PRU00253"/>
    </source>
</evidence>
<evidence type="ECO:0000305" key="2"/>
<proteinExistence type="inferred from homology"/>
<protein>
    <recommendedName>
        <fullName>Nodulation protein D</fullName>
    </recommendedName>
</protein>
<organism>
    <name type="scientific">Azorhizobium caulinodans (strain ATCC 43989 / DSM 5975 / JCM 20966 / LMG 6465 / NBRC 14845 / NCIMB 13405 / ORS 571)</name>
    <dbReference type="NCBI Taxonomy" id="438753"/>
    <lineage>
        <taxon>Bacteria</taxon>
        <taxon>Pseudomonadati</taxon>
        <taxon>Pseudomonadota</taxon>
        <taxon>Alphaproteobacteria</taxon>
        <taxon>Hyphomicrobiales</taxon>
        <taxon>Xanthobacteraceae</taxon>
        <taxon>Azorhizobium</taxon>
    </lineage>
</organism>
<comment type="function">
    <text>NodD regulates the expression of the nodABCFE genes which encode other nodulation proteins. NodD is also a negative regulator of its own expression. Binds flavonoids as inducers.</text>
</comment>
<comment type="similarity">
    <text evidence="2">Belongs to the LysR transcriptional regulatory family.</text>
</comment>
<sequence length="314" mass="35551">MRFKGLDLNLLVALNALLSEHSVTSAAKSINLSQPAMSAAVQRLRIYFNDDLFTINGRERVFTARAESLAPAVRDILSRIQSTIIKGDLFEADRSERVFRIISSDYSTSIFIRGVISAASTSLPLLRFELISPDDNCHDLLNKSEVDALIMPEIFMSSAHPFVPLFEEKMVCVGCARNHEDRNISSIQEYLSMRHVVAKFGRGMRPSLEEWFMAENGMRRRIDIVVQSFSMIPPVIQGTERIAIMPYRLVEHFSKFMPLKVFALPFPLPRFTECLQWPSIATPDLGNRWLRAYLADHASQMMILDSAEYSGASI</sequence>
<reference key="1">
    <citation type="journal article" date="1990" name="J. Bacteriol.">
        <title>Identification and characterization of a functional nodD gene in Azorhizobium caulinodans ORS571.</title>
        <authorList>
            <person name="Goethals K."/>
            <person name="van den Eede G."/>
            <person name="van Montagu M."/>
            <person name="Holsters M."/>
        </authorList>
    </citation>
    <scope>NUCLEOTIDE SEQUENCE [GENOMIC DNA]</scope>
</reference>
<reference key="2">
    <citation type="submission" date="2007-04" db="EMBL/GenBank/DDBJ databases">
        <title>Complete genome sequence of the nitrogen-fixing bacterium Azorhizobium caulinodans ORS571.</title>
        <authorList>
            <person name="Lee K.B."/>
            <person name="Backer P.D."/>
            <person name="Aono T."/>
            <person name="Liu C.T."/>
            <person name="Suzuki S."/>
            <person name="Suzuki T."/>
            <person name="Kaneko T."/>
            <person name="Yamada M."/>
            <person name="Tabata S."/>
            <person name="Kupfer D.M."/>
            <person name="Najar F.Z."/>
            <person name="Wiley G.B."/>
            <person name="Roe B."/>
            <person name="Binnewies T."/>
            <person name="Ussery D."/>
            <person name="Vereecke D."/>
            <person name="Gevers D."/>
            <person name="Holsters M."/>
            <person name="Oyaizu H."/>
        </authorList>
    </citation>
    <scope>NUCLEOTIDE SEQUENCE [LARGE SCALE GENOMIC DNA]</scope>
    <source>
        <strain>ATCC 43989 / DSM 5975 / JCM 20966 / LMG 6465 / NBRC 14845 / NCIMB 13405 / ORS 571</strain>
    </source>
</reference>
<gene>
    <name type="primary">nodD</name>
    <name type="ordered locus">AZC_3792</name>
</gene>
<feature type="chain" id="PRO_0000105699" description="Nodulation protein D">
    <location>
        <begin position="1"/>
        <end position="314"/>
    </location>
</feature>
<feature type="domain" description="HTH lysR-type" evidence="1">
    <location>
        <begin position="6"/>
        <end position="63"/>
    </location>
</feature>
<feature type="DNA-binding region" description="H-T-H motif" evidence="1">
    <location>
        <begin position="23"/>
        <end position="42"/>
    </location>
</feature>
<feature type="sequence conflict" description="In Ref. 1; AAA26190/CAA88827." evidence="2" ref="1">
    <original>A</original>
    <variation>T</variation>
    <location>
        <position position="298"/>
    </location>
</feature>